<protein>
    <recommendedName>
        <fullName evidence="1">Large ribosomal subunit protein uL23</fullName>
    </recommendedName>
    <alternativeName>
        <fullName evidence="2">50S ribosomal protein L23</fullName>
    </alternativeName>
</protein>
<dbReference type="EMBL" id="CP000611">
    <property type="protein sequence ID" value="ABQ72439.1"/>
    <property type="molecule type" value="Genomic_DNA"/>
</dbReference>
<dbReference type="RefSeq" id="WP_003403581.1">
    <property type="nucleotide sequence ID" value="NZ_CP016972.1"/>
</dbReference>
<dbReference type="PDB" id="7F0D">
    <property type="method" value="EM"/>
    <property type="resolution" value="3.30 A"/>
    <property type="chains" value="T=1-100"/>
</dbReference>
<dbReference type="PDBsum" id="7F0D"/>
<dbReference type="SMR" id="A5U089"/>
<dbReference type="KEGG" id="mra:MRA_0711"/>
<dbReference type="eggNOG" id="COG0089">
    <property type="taxonomic scope" value="Bacteria"/>
</dbReference>
<dbReference type="HOGENOM" id="CLU_037562_3_2_11"/>
<dbReference type="Proteomes" id="UP000001988">
    <property type="component" value="Chromosome"/>
</dbReference>
<dbReference type="GO" id="GO:1990904">
    <property type="term" value="C:ribonucleoprotein complex"/>
    <property type="evidence" value="ECO:0007669"/>
    <property type="project" value="UniProtKB-KW"/>
</dbReference>
<dbReference type="GO" id="GO:0005840">
    <property type="term" value="C:ribosome"/>
    <property type="evidence" value="ECO:0007669"/>
    <property type="project" value="UniProtKB-KW"/>
</dbReference>
<dbReference type="GO" id="GO:0019843">
    <property type="term" value="F:rRNA binding"/>
    <property type="evidence" value="ECO:0007669"/>
    <property type="project" value="UniProtKB-UniRule"/>
</dbReference>
<dbReference type="GO" id="GO:0003735">
    <property type="term" value="F:structural constituent of ribosome"/>
    <property type="evidence" value="ECO:0007669"/>
    <property type="project" value="InterPro"/>
</dbReference>
<dbReference type="GO" id="GO:0006412">
    <property type="term" value="P:translation"/>
    <property type="evidence" value="ECO:0007669"/>
    <property type="project" value="UniProtKB-UniRule"/>
</dbReference>
<dbReference type="FunFam" id="3.30.70.330:FF:000001">
    <property type="entry name" value="50S ribosomal protein L23"/>
    <property type="match status" value="1"/>
</dbReference>
<dbReference type="Gene3D" id="3.30.70.330">
    <property type="match status" value="1"/>
</dbReference>
<dbReference type="HAMAP" id="MF_01369_B">
    <property type="entry name" value="Ribosomal_uL23_B"/>
    <property type="match status" value="1"/>
</dbReference>
<dbReference type="InterPro" id="IPR012677">
    <property type="entry name" value="Nucleotide-bd_a/b_plait_sf"/>
</dbReference>
<dbReference type="InterPro" id="IPR013025">
    <property type="entry name" value="Ribosomal_uL23-like"/>
</dbReference>
<dbReference type="InterPro" id="IPR012678">
    <property type="entry name" value="Ribosomal_uL23/eL15/eS24_sf"/>
</dbReference>
<dbReference type="InterPro" id="IPR001014">
    <property type="entry name" value="Ribosomal_uL23_CS"/>
</dbReference>
<dbReference type="NCBIfam" id="NF004363">
    <property type="entry name" value="PRK05738.2-4"/>
    <property type="match status" value="1"/>
</dbReference>
<dbReference type="NCBIfam" id="NF004364">
    <property type="entry name" value="PRK05738.2-5"/>
    <property type="match status" value="1"/>
</dbReference>
<dbReference type="PANTHER" id="PTHR11620">
    <property type="entry name" value="60S RIBOSOMAL PROTEIN L23A"/>
    <property type="match status" value="1"/>
</dbReference>
<dbReference type="Pfam" id="PF00276">
    <property type="entry name" value="Ribosomal_L23"/>
    <property type="match status" value="1"/>
</dbReference>
<dbReference type="SUPFAM" id="SSF54189">
    <property type="entry name" value="Ribosomal proteins S24e, L23 and L15e"/>
    <property type="match status" value="1"/>
</dbReference>
<dbReference type="PROSITE" id="PS00050">
    <property type="entry name" value="RIBOSOMAL_L23"/>
    <property type="match status" value="1"/>
</dbReference>
<gene>
    <name evidence="1" type="primary">rplW</name>
    <name type="ordered locus">MRA_0711</name>
</gene>
<evidence type="ECO:0000255" key="1">
    <source>
        <dbReference type="HAMAP-Rule" id="MF_01369"/>
    </source>
</evidence>
<evidence type="ECO:0000305" key="2"/>
<evidence type="ECO:0007829" key="3">
    <source>
        <dbReference type="PDB" id="7F0D"/>
    </source>
</evidence>
<reference key="1">
    <citation type="journal article" date="2008" name="PLoS ONE">
        <title>Genetic basis of virulence attenuation revealed by comparative genomic analysis of Mycobacterium tuberculosis strain H37Ra versus H37Rv.</title>
        <authorList>
            <person name="Zheng H."/>
            <person name="Lu L."/>
            <person name="Wang B."/>
            <person name="Pu S."/>
            <person name="Zhang X."/>
            <person name="Zhu G."/>
            <person name="Shi W."/>
            <person name="Zhang L."/>
            <person name="Wang H."/>
            <person name="Wang S."/>
            <person name="Zhao G."/>
            <person name="Zhang Y."/>
        </authorList>
    </citation>
    <scope>NUCLEOTIDE SEQUENCE [LARGE SCALE GENOMIC DNA]</scope>
    <source>
        <strain>ATCC 25177 / H37Ra</strain>
    </source>
</reference>
<name>RL23_MYCTA</name>
<comment type="function">
    <text evidence="1">One of the early assembly proteins it binds 23S rRNA. One of the proteins that surrounds the polypeptide exit tunnel on the outside of the ribosome. Forms the main docking site for trigger factor binding to the ribosome.</text>
</comment>
<comment type="subunit">
    <text evidence="1">Part of the 50S ribosomal subunit. Contacts protein L29, and trigger factor when it is bound to the ribosome.</text>
</comment>
<comment type="similarity">
    <text evidence="1">Belongs to the universal ribosomal protein uL23 family.</text>
</comment>
<feature type="chain" id="PRO_1000068117" description="Large ribosomal subunit protein uL23">
    <location>
        <begin position="1"/>
        <end position="100"/>
    </location>
</feature>
<feature type="helix" evidence="3">
    <location>
        <begin position="7"/>
        <end position="9"/>
    </location>
</feature>
<feature type="strand" evidence="3">
    <location>
        <begin position="11"/>
        <end position="14"/>
    </location>
</feature>
<feature type="helix" evidence="3">
    <location>
        <begin position="19"/>
        <end position="22"/>
    </location>
</feature>
<feature type="helix" evidence="3">
    <location>
        <begin position="23"/>
        <end position="27"/>
    </location>
</feature>
<feature type="strand" evidence="3">
    <location>
        <begin position="28"/>
        <end position="33"/>
    </location>
</feature>
<feature type="helix" evidence="3">
    <location>
        <begin position="39"/>
        <end position="49"/>
    </location>
</feature>
<feature type="strand" evidence="3">
    <location>
        <begin position="54"/>
        <end position="60"/>
    </location>
</feature>
<feature type="strand" evidence="3">
    <location>
        <begin position="70"/>
        <end position="73"/>
    </location>
</feature>
<feature type="strand" evidence="3">
    <location>
        <begin position="81"/>
        <end position="87"/>
    </location>
</feature>
<keyword id="KW-0002">3D-structure</keyword>
<keyword id="KW-1185">Reference proteome</keyword>
<keyword id="KW-0687">Ribonucleoprotein</keyword>
<keyword id="KW-0689">Ribosomal protein</keyword>
<keyword id="KW-0694">RNA-binding</keyword>
<keyword id="KW-0699">rRNA-binding</keyword>
<proteinExistence type="evidence at protein level"/>
<accession>A5U089</accession>
<organism>
    <name type="scientific">Mycobacterium tuberculosis (strain ATCC 25177 / H37Ra)</name>
    <dbReference type="NCBI Taxonomy" id="419947"/>
    <lineage>
        <taxon>Bacteria</taxon>
        <taxon>Bacillati</taxon>
        <taxon>Actinomycetota</taxon>
        <taxon>Actinomycetes</taxon>
        <taxon>Mycobacteriales</taxon>
        <taxon>Mycobacteriaceae</taxon>
        <taxon>Mycobacterium</taxon>
        <taxon>Mycobacterium tuberculosis complex</taxon>
    </lineage>
</organism>
<sequence>MATLADPRDIILAPVISEKSYGLLDDNVYTFLVRPDSNKTQIKIAVEKIFAVKVASVNTANRQGKRKRTRTGYGKRKSTKRAIVTLAPGSRPIDLFGAPA</sequence>